<gene>
    <name evidence="1" type="primary">psbL</name>
</gene>
<accession>B0Z559</accession>
<protein>
    <recommendedName>
        <fullName evidence="1">Photosystem II reaction center protein L</fullName>
        <shortName evidence="1">PSII-L</shortName>
    </recommendedName>
</protein>
<geneLocation type="chloroplast"/>
<feature type="chain" id="PRO_0000353266" description="Photosystem II reaction center protein L">
    <location>
        <begin position="1"/>
        <end position="38"/>
    </location>
</feature>
<feature type="transmembrane region" description="Helical" evidence="1">
    <location>
        <begin position="17"/>
        <end position="37"/>
    </location>
</feature>
<reference key="1">
    <citation type="journal article" date="2008" name="Nucleic Acids Res.">
        <title>The complete nucleotide sequences of the five genetically distinct plastid genomes of Oenothera, subsection Oenothera: I. Sequence evaluation and plastome evolution.</title>
        <authorList>
            <person name="Greiner S."/>
            <person name="Wang X."/>
            <person name="Rauwolf U."/>
            <person name="Silber M.V."/>
            <person name="Mayer K."/>
            <person name="Meurer J."/>
            <person name="Haberer G."/>
            <person name="Herrmann R.G."/>
        </authorList>
    </citation>
    <scope>NUCLEOTIDE SEQUENCE [LARGE SCALE GENOMIC DNA]</scope>
    <source>
        <strain>cv. Rr-lamarckiana Sweden</strain>
    </source>
</reference>
<evidence type="ECO:0000255" key="1">
    <source>
        <dbReference type="HAMAP-Rule" id="MF_01317"/>
    </source>
</evidence>
<organism>
    <name type="scientific">Oenothera glazioviana</name>
    <name type="common">Large-flowered evening primrose</name>
    <name type="synonym">Oenothera erythrosepala</name>
    <dbReference type="NCBI Taxonomy" id="482428"/>
    <lineage>
        <taxon>Eukaryota</taxon>
        <taxon>Viridiplantae</taxon>
        <taxon>Streptophyta</taxon>
        <taxon>Embryophyta</taxon>
        <taxon>Tracheophyta</taxon>
        <taxon>Spermatophyta</taxon>
        <taxon>Magnoliopsida</taxon>
        <taxon>eudicotyledons</taxon>
        <taxon>Gunneridae</taxon>
        <taxon>Pentapetalae</taxon>
        <taxon>rosids</taxon>
        <taxon>malvids</taxon>
        <taxon>Myrtales</taxon>
        <taxon>Onagraceae</taxon>
        <taxon>Onagroideae</taxon>
        <taxon>Onagreae</taxon>
        <taxon>Oenothera</taxon>
    </lineage>
</organism>
<proteinExistence type="inferred from homology"/>
<sequence length="38" mass="4498">MTQSNPNEQDVELNRTSLYWGLLLIFVLAVLFSNYFFN</sequence>
<comment type="function">
    <text evidence="1">One of the components of the core complex of photosystem II (PSII). PSII is a light-driven water:plastoquinone oxidoreductase that uses light energy to abstract electrons from H(2)O, generating O(2) and a proton gradient subsequently used for ATP formation. It consists of a core antenna complex that captures photons, and an electron transfer chain that converts photonic excitation into a charge separation. This subunit is found at the monomer-monomer interface and is required for correct PSII assembly and/or dimerization.</text>
</comment>
<comment type="subunit">
    <text evidence="1">PSII is composed of 1 copy each of membrane proteins PsbA, PsbB, PsbC, PsbD, PsbE, PsbF, PsbH, PsbI, PsbJ, PsbK, PsbL, PsbM, PsbT, PsbX, PsbY, PsbZ, Psb30/Ycf12, at least 3 peripheral proteins of the oxygen-evolving complex and a large number of cofactors. It forms dimeric complexes.</text>
</comment>
<comment type="subcellular location">
    <subcellularLocation>
        <location evidence="1">Plastid</location>
        <location evidence="1">Chloroplast thylakoid membrane</location>
        <topology evidence="1">Single-pass membrane protein</topology>
    </subcellularLocation>
</comment>
<comment type="similarity">
    <text evidence="1">Belongs to the PsbL family.</text>
</comment>
<name>PSBL_OENGL</name>
<keyword id="KW-0150">Chloroplast</keyword>
<keyword id="KW-0472">Membrane</keyword>
<keyword id="KW-0602">Photosynthesis</keyword>
<keyword id="KW-0604">Photosystem II</keyword>
<keyword id="KW-0934">Plastid</keyword>
<keyword id="KW-0674">Reaction center</keyword>
<keyword id="KW-0793">Thylakoid</keyword>
<keyword id="KW-0812">Transmembrane</keyword>
<keyword id="KW-1133">Transmembrane helix</keyword>
<dbReference type="EMBL" id="EU262890">
    <property type="protein sequence ID" value="ABX10052.1"/>
    <property type="molecule type" value="Genomic_DNA"/>
</dbReference>
<dbReference type="RefSeq" id="YP_001687298.1">
    <property type="nucleotide sequence ID" value="NC_010360.2"/>
</dbReference>
<dbReference type="SMR" id="B0Z559"/>
<dbReference type="GeneID" id="5955229"/>
<dbReference type="GO" id="GO:0009535">
    <property type="term" value="C:chloroplast thylakoid membrane"/>
    <property type="evidence" value="ECO:0007669"/>
    <property type="project" value="UniProtKB-SubCell"/>
</dbReference>
<dbReference type="GO" id="GO:0009539">
    <property type="term" value="C:photosystem II reaction center"/>
    <property type="evidence" value="ECO:0007669"/>
    <property type="project" value="InterPro"/>
</dbReference>
<dbReference type="GO" id="GO:0015979">
    <property type="term" value="P:photosynthesis"/>
    <property type="evidence" value="ECO:0007669"/>
    <property type="project" value="UniProtKB-UniRule"/>
</dbReference>
<dbReference type="HAMAP" id="MF_01317">
    <property type="entry name" value="PSII_PsbL"/>
    <property type="match status" value="1"/>
</dbReference>
<dbReference type="InterPro" id="IPR003372">
    <property type="entry name" value="PSII_PsbL"/>
</dbReference>
<dbReference type="InterPro" id="IPR037266">
    <property type="entry name" value="PSII_PsbL_sf"/>
</dbReference>
<dbReference type="NCBIfam" id="NF001972">
    <property type="entry name" value="PRK00753.1"/>
    <property type="match status" value="1"/>
</dbReference>
<dbReference type="Pfam" id="PF02419">
    <property type="entry name" value="PsbL"/>
    <property type="match status" value="1"/>
</dbReference>
<dbReference type="SUPFAM" id="SSF161017">
    <property type="entry name" value="Photosystem II reaction center protein L, PsbL"/>
    <property type="match status" value="1"/>
</dbReference>